<proteinExistence type="inferred from homology"/>
<dbReference type="EMBL" id="EU233840">
    <property type="protein sequence ID" value="ABY71659.1"/>
    <property type="molecule type" value="mRNA"/>
</dbReference>
<dbReference type="SMR" id="B1P1A9"/>
<dbReference type="ArachnoServer" id="AS000789">
    <property type="toxin name" value="U3-theraphotoxin-Cg1c"/>
</dbReference>
<dbReference type="GO" id="GO:0005576">
    <property type="term" value="C:extracellular region"/>
    <property type="evidence" value="ECO:0007669"/>
    <property type="project" value="UniProtKB-SubCell"/>
</dbReference>
<dbReference type="GO" id="GO:0099106">
    <property type="term" value="F:ion channel regulator activity"/>
    <property type="evidence" value="ECO:0007669"/>
    <property type="project" value="UniProtKB-KW"/>
</dbReference>
<dbReference type="GO" id="GO:0090729">
    <property type="term" value="F:toxin activity"/>
    <property type="evidence" value="ECO:0007669"/>
    <property type="project" value="UniProtKB-KW"/>
</dbReference>
<dbReference type="InterPro" id="IPR012625">
    <property type="entry name" value="Hwtx-2-like"/>
</dbReference>
<dbReference type="Pfam" id="PF08089">
    <property type="entry name" value="Toxin_20"/>
    <property type="match status" value="1"/>
</dbReference>
<dbReference type="SUPFAM" id="SSF57059">
    <property type="entry name" value="omega toxin-like"/>
    <property type="match status" value="1"/>
</dbReference>
<dbReference type="PROSITE" id="PS60022">
    <property type="entry name" value="HWTX_2"/>
    <property type="match status" value="1"/>
</dbReference>
<evidence type="ECO:0000250" key="1"/>
<evidence type="ECO:0000250" key="2">
    <source>
        <dbReference type="UniProtKB" id="B1P1A6"/>
    </source>
</evidence>
<evidence type="ECO:0000250" key="3">
    <source>
        <dbReference type="UniProtKB" id="P85504"/>
    </source>
</evidence>
<evidence type="ECO:0000255" key="4"/>
<evidence type="ECO:0000305" key="5"/>
<evidence type="ECO:0000312" key="6">
    <source>
        <dbReference type="EMBL" id="ABY71659.1"/>
    </source>
</evidence>
<keyword id="KW-1015">Disulfide bond</keyword>
<keyword id="KW-0872">Ion channel impairing toxin</keyword>
<keyword id="KW-0960">Knottin</keyword>
<keyword id="KW-0964">Secreted</keyword>
<keyword id="KW-0732">Signal</keyword>
<keyword id="KW-0800">Toxin</keyword>
<reference key="1">
    <citation type="journal article" date="2008" name="Cell. Mol. Life Sci.">
        <title>Molecular diversity and evolution of cystine knot toxins of the tarantula Chilobrachys jingzhao.</title>
        <authorList>
            <person name="Chen J."/>
            <person name="Deng M."/>
            <person name="He Q."/>
            <person name="Meng E."/>
            <person name="Jiang L."/>
            <person name="Liao Z."/>
            <person name="Rong M."/>
            <person name="Liang S."/>
        </authorList>
    </citation>
    <scope>NUCLEOTIDE SEQUENCE [LARGE SCALE MRNA]</scope>
    <source>
        <tissue>Venom gland</tissue>
    </source>
</reference>
<comment type="function">
    <text evidence="5">Probable ion channel inhibitor.</text>
</comment>
<comment type="subcellular location">
    <subcellularLocation>
        <location evidence="2">Secreted</location>
    </subcellularLocation>
</comment>
<comment type="tissue specificity">
    <text evidence="5">Expressed by the venom gland.</text>
</comment>
<comment type="similarity">
    <text evidence="5">Belongs to the neurotoxin 12 (Hwtx-2) family. 03 (juruin) subfamily.</text>
</comment>
<accession>B1P1A9</accession>
<name>JZT48_CHIGU</name>
<sequence length="87" mass="9641">MRTFTLIAILTCAVLVIFHVSAAEELEAQDVIQPEDIFTGVATLEEDRIFECSFSCDIKKNGKPCTGAGEKKCSGGWRCKMNFCVKF</sequence>
<protein>
    <recommendedName>
        <fullName evidence="5">U3-theraphotoxin-Cg1c</fullName>
        <shortName evidence="5">U3-TRTX-Cg1c</shortName>
    </recommendedName>
    <alternativeName>
        <fullName evidence="5">Jingzhaotoxin-48</fullName>
        <shortName evidence="6">JZTX-48</shortName>
    </alternativeName>
</protein>
<feature type="signal peptide" evidence="4">
    <location>
        <begin position="1"/>
        <end position="23"/>
    </location>
</feature>
<feature type="propeptide" id="PRO_0000398506" evidence="1">
    <location>
        <begin position="24"/>
        <end position="51"/>
    </location>
</feature>
<feature type="peptide" id="PRO_0000398507" description="U3-theraphotoxin-Cg1c" evidence="2">
    <location>
        <begin position="52"/>
        <end position="87"/>
    </location>
</feature>
<feature type="disulfide bond" evidence="3">
    <location>
        <begin position="52"/>
        <end position="65"/>
    </location>
</feature>
<feature type="disulfide bond" evidence="3">
    <location>
        <begin position="56"/>
        <end position="79"/>
    </location>
</feature>
<feature type="disulfide bond" evidence="3">
    <location>
        <begin position="73"/>
        <end position="84"/>
    </location>
</feature>
<organism>
    <name type="scientific">Chilobrachys guangxiensis</name>
    <name type="common">Chinese earth tiger tarantula</name>
    <name type="synonym">Chilobrachys jingzhao</name>
    <dbReference type="NCBI Taxonomy" id="278060"/>
    <lineage>
        <taxon>Eukaryota</taxon>
        <taxon>Metazoa</taxon>
        <taxon>Ecdysozoa</taxon>
        <taxon>Arthropoda</taxon>
        <taxon>Chelicerata</taxon>
        <taxon>Arachnida</taxon>
        <taxon>Araneae</taxon>
        <taxon>Mygalomorphae</taxon>
        <taxon>Theraphosidae</taxon>
        <taxon>Chilobrachys</taxon>
    </lineage>
</organism>